<organism>
    <name type="scientific">Escherichia coli O81 (strain ED1a)</name>
    <dbReference type="NCBI Taxonomy" id="585397"/>
    <lineage>
        <taxon>Bacteria</taxon>
        <taxon>Pseudomonadati</taxon>
        <taxon>Pseudomonadota</taxon>
        <taxon>Gammaproteobacteria</taxon>
        <taxon>Enterobacterales</taxon>
        <taxon>Enterobacteriaceae</taxon>
        <taxon>Escherichia</taxon>
    </lineage>
</organism>
<feature type="chain" id="PRO_1000149556" description="Ribosome rescue factor SmrB">
    <location>
        <begin position="1"/>
        <end position="183"/>
    </location>
</feature>
<feature type="domain" description="Smr" evidence="1">
    <location>
        <begin position="98"/>
        <end position="173"/>
    </location>
</feature>
<name>SMRB_ECO81</name>
<protein>
    <recommendedName>
        <fullName evidence="1">Ribosome rescue factor SmrB</fullName>
        <ecNumber evidence="1">3.1.-.-</ecNumber>
    </recommendedName>
</protein>
<gene>
    <name evidence="1" type="primary">smrB</name>
    <name type="ordered locus">ECED1_2795</name>
</gene>
<keyword id="KW-0255">Endonuclease</keyword>
<keyword id="KW-0378">Hydrolase</keyword>
<keyword id="KW-0540">Nuclease</keyword>
<keyword id="KW-0694">RNA-binding</keyword>
<keyword id="KW-0699">rRNA-binding</keyword>
<evidence type="ECO:0000255" key="1">
    <source>
        <dbReference type="HAMAP-Rule" id="MF_01042"/>
    </source>
</evidence>
<proteinExistence type="inferred from homology"/>
<accession>B7MY08</accession>
<comment type="function">
    <text evidence="1">Acts as a ribosome collision sensor. Detects stalled/collided disomes (pairs of ribosomes where the leading ribosome is stalled and a second ribosome has collided with it) and endonucleolytically cleaves mRNA at the 5' boundary of the stalled ribosome. Stalled/collided disomes form a new interface (primarily via the 30S subunits) that binds SmrB. Cleaved mRNA becomes available for tmRNA ligation, leading to ribosomal subunit dissociation and rescue of stalled ribosomes.</text>
</comment>
<comment type="subunit">
    <text evidence="1">Associates with collided ribosomes, but not with correctly translating polysomes.</text>
</comment>
<comment type="similarity">
    <text evidence="1">Belongs to the SmrB family.</text>
</comment>
<reference key="1">
    <citation type="journal article" date="2009" name="PLoS Genet.">
        <title>Organised genome dynamics in the Escherichia coli species results in highly diverse adaptive paths.</title>
        <authorList>
            <person name="Touchon M."/>
            <person name="Hoede C."/>
            <person name="Tenaillon O."/>
            <person name="Barbe V."/>
            <person name="Baeriswyl S."/>
            <person name="Bidet P."/>
            <person name="Bingen E."/>
            <person name="Bonacorsi S."/>
            <person name="Bouchier C."/>
            <person name="Bouvet O."/>
            <person name="Calteau A."/>
            <person name="Chiapello H."/>
            <person name="Clermont O."/>
            <person name="Cruveiller S."/>
            <person name="Danchin A."/>
            <person name="Diard M."/>
            <person name="Dossat C."/>
            <person name="Karoui M.E."/>
            <person name="Frapy E."/>
            <person name="Garry L."/>
            <person name="Ghigo J.M."/>
            <person name="Gilles A.M."/>
            <person name="Johnson J."/>
            <person name="Le Bouguenec C."/>
            <person name="Lescat M."/>
            <person name="Mangenot S."/>
            <person name="Martinez-Jehanne V."/>
            <person name="Matic I."/>
            <person name="Nassif X."/>
            <person name="Oztas S."/>
            <person name="Petit M.A."/>
            <person name="Pichon C."/>
            <person name="Rouy Z."/>
            <person name="Ruf C.S."/>
            <person name="Schneider D."/>
            <person name="Tourret J."/>
            <person name="Vacherie B."/>
            <person name="Vallenet D."/>
            <person name="Medigue C."/>
            <person name="Rocha E.P.C."/>
            <person name="Denamur E."/>
        </authorList>
    </citation>
    <scope>NUCLEOTIDE SEQUENCE [LARGE SCALE GENOMIC DNA]</scope>
    <source>
        <strain>ED1a</strain>
    </source>
</reference>
<dbReference type="EC" id="3.1.-.-" evidence="1"/>
<dbReference type="EMBL" id="CU928162">
    <property type="protein sequence ID" value="CAR08974.2"/>
    <property type="molecule type" value="Genomic_DNA"/>
</dbReference>
<dbReference type="RefSeq" id="WP_000730806.1">
    <property type="nucleotide sequence ID" value="NC_011745.1"/>
</dbReference>
<dbReference type="SMR" id="B7MY08"/>
<dbReference type="GeneID" id="93774844"/>
<dbReference type="KEGG" id="ecq:ECED1_2795"/>
<dbReference type="HOGENOM" id="CLU_055978_4_0_6"/>
<dbReference type="Proteomes" id="UP000000748">
    <property type="component" value="Chromosome"/>
</dbReference>
<dbReference type="GO" id="GO:0004521">
    <property type="term" value="F:RNA endonuclease activity"/>
    <property type="evidence" value="ECO:0007669"/>
    <property type="project" value="UniProtKB-UniRule"/>
</dbReference>
<dbReference type="GO" id="GO:0019843">
    <property type="term" value="F:rRNA binding"/>
    <property type="evidence" value="ECO:0007669"/>
    <property type="project" value="UniProtKB-UniRule"/>
</dbReference>
<dbReference type="GO" id="GO:0072344">
    <property type="term" value="P:rescue of stalled ribosome"/>
    <property type="evidence" value="ECO:0007669"/>
    <property type="project" value="UniProtKB-UniRule"/>
</dbReference>
<dbReference type="Gene3D" id="3.30.1370.110">
    <property type="match status" value="1"/>
</dbReference>
<dbReference type="HAMAP" id="MF_01042">
    <property type="entry name" value="SmrB"/>
    <property type="match status" value="1"/>
</dbReference>
<dbReference type="InterPro" id="IPR002625">
    <property type="entry name" value="Smr_dom"/>
</dbReference>
<dbReference type="InterPro" id="IPR036063">
    <property type="entry name" value="Smr_dom_sf"/>
</dbReference>
<dbReference type="InterPro" id="IPR022990">
    <property type="entry name" value="SmrB-like"/>
</dbReference>
<dbReference type="NCBIfam" id="NF003432">
    <property type="entry name" value="PRK04946.1"/>
    <property type="match status" value="1"/>
</dbReference>
<dbReference type="PANTHER" id="PTHR35562">
    <property type="entry name" value="DNA ENDONUCLEASE SMRA-RELATED"/>
    <property type="match status" value="1"/>
</dbReference>
<dbReference type="PANTHER" id="PTHR35562:SF1">
    <property type="entry name" value="UPF0115 PROTEIN YFCN"/>
    <property type="match status" value="1"/>
</dbReference>
<dbReference type="Pfam" id="PF01713">
    <property type="entry name" value="Smr"/>
    <property type="match status" value="1"/>
</dbReference>
<dbReference type="SMART" id="SM00463">
    <property type="entry name" value="SMR"/>
    <property type="match status" value="1"/>
</dbReference>
<dbReference type="SUPFAM" id="SSF160443">
    <property type="entry name" value="SMR domain-like"/>
    <property type="match status" value="1"/>
</dbReference>
<dbReference type="PROSITE" id="PS50828">
    <property type="entry name" value="SMR"/>
    <property type="match status" value="1"/>
</dbReference>
<sequence>MKKKTTLSEEDQALFRQLMAGTRKIKQDTIVHRPQRKKISEVPVKRLIQEQADASHYFSDEFQPLLNTEGPVKYVRPDVSHFEAKKLRRGDYSPELFLDLHGLTQLQAKQELGALIAACRREHVFCACVMHGHGKHILKQQTPLWLAQHPHVMAFHQAPKEYGGDAALLVLIEVEEWLPPELP</sequence>